<organism>
    <name type="scientific">Equus caballus</name>
    <name type="common">Horse</name>
    <dbReference type="NCBI Taxonomy" id="9796"/>
    <lineage>
        <taxon>Eukaryota</taxon>
        <taxon>Metazoa</taxon>
        <taxon>Chordata</taxon>
        <taxon>Craniata</taxon>
        <taxon>Vertebrata</taxon>
        <taxon>Euteleostomi</taxon>
        <taxon>Mammalia</taxon>
        <taxon>Eutheria</taxon>
        <taxon>Laurasiatheria</taxon>
        <taxon>Perissodactyla</taxon>
        <taxon>Equidae</taxon>
        <taxon>Equus</taxon>
    </lineage>
</organism>
<dbReference type="EC" id="7.1.1.9"/>
<dbReference type="EMBL" id="X79547">
    <property type="protein sequence ID" value="CAA56082.1"/>
    <property type="molecule type" value="Genomic_DNA"/>
</dbReference>
<dbReference type="EMBL" id="U83503">
    <property type="protein sequence ID" value="AAB48457.1"/>
    <property type="molecule type" value="Genomic_DNA"/>
</dbReference>
<dbReference type="PIR" id="T11860">
    <property type="entry name" value="T11860"/>
</dbReference>
<dbReference type="RefSeq" id="NP_007163.1">
    <property type="nucleotide sequence ID" value="NC_001640.1"/>
</dbReference>
<dbReference type="SMR" id="P48660"/>
<dbReference type="FunCoup" id="P48660">
    <property type="interactions" value="179"/>
</dbReference>
<dbReference type="STRING" id="9796.ENSECAP00000023106"/>
<dbReference type="PaxDb" id="9796-ENSECAP00000023106"/>
<dbReference type="Ensembl" id="ENSECAT00000029837.1">
    <property type="protein sequence ID" value="ENSECAP00000023106.1"/>
    <property type="gene ID" value="ENSECAG00000027692.1"/>
</dbReference>
<dbReference type="KEGG" id="ecb:807845"/>
<dbReference type="VGNC" id="VGNC:59016">
    <property type="gene designation" value="MT-CO2"/>
</dbReference>
<dbReference type="GeneTree" id="ENSGT00390000017410"/>
<dbReference type="HOGENOM" id="CLU_036876_2_3_1"/>
<dbReference type="InParanoid" id="P48660"/>
<dbReference type="OMA" id="WSYEYTD"/>
<dbReference type="OrthoDB" id="539285at2759"/>
<dbReference type="Proteomes" id="UP000002281">
    <property type="component" value="Mitochondrion"/>
</dbReference>
<dbReference type="Bgee" id="ENSECAG00000027692">
    <property type="expression patterns" value="Expressed in gluteus medius and 23 other cell types or tissues"/>
</dbReference>
<dbReference type="GO" id="GO:0005743">
    <property type="term" value="C:mitochondrial inner membrane"/>
    <property type="evidence" value="ECO:0007669"/>
    <property type="project" value="UniProtKB-SubCell"/>
</dbReference>
<dbReference type="GO" id="GO:0045277">
    <property type="term" value="C:respiratory chain complex IV"/>
    <property type="evidence" value="ECO:0000250"/>
    <property type="project" value="UniProtKB"/>
</dbReference>
<dbReference type="GO" id="GO:0005507">
    <property type="term" value="F:copper ion binding"/>
    <property type="evidence" value="ECO:0007669"/>
    <property type="project" value="InterPro"/>
</dbReference>
<dbReference type="GO" id="GO:0004129">
    <property type="term" value="F:cytochrome-c oxidase activity"/>
    <property type="evidence" value="ECO:0007669"/>
    <property type="project" value="UniProtKB-EC"/>
</dbReference>
<dbReference type="GO" id="GO:0042773">
    <property type="term" value="P:ATP synthesis coupled electron transport"/>
    <property type="evidence" value="ECO:0000318"/>
    <property type="project" value="GO_Central"/>
</dbReference>
<dbReference type="CDD" id="cd13912">
    <property type="entry name" value="CcO_II_C"/>
    <property type="match status" value="1"/>
</dbReference>
<dbReference type="FunFam" id="1.10.287.90:FF:000001">
    <property type="entry name" value="Cytochrome c oxidase subunit 2"/>
    <property type="match status" value="1"/>
</dbReference>
<dbReference type="FunFam" id="2.60.40.420:FF:000001">
    <property type="entry name" value="Cytochrome c oxidase subunit 2"/>
    <property type="match status" value="1"/>
</dbReference>
<dbReference type="Gene3D" id="1.10.287.90">
    <property type="match status" value="1"/>
</dbReference>
<dbReference type="Gene3D" id="2.60.40.420">
    <property type="entry name" value="Cupredoxins - blue copper proteins"/>
    <property type="match status" value="1"/>
</dbReference>
<dbReference type="InterPro" id="IPR045187">
    <property type="entry name" value="CcO_II"/>
</dbReference>
<dbReference type="InterPro" id="IPR002429">
    <property type="entry name" value="CcO_II-like_C"/>
</dbReference>
<dbReference type="InterPro" id="IPR034210">
    <property type="entry name" value="CcO_II_C"/>
</dbReference>
<dbReference type="InterPro" id="IPR001505">
    <property type="entry name" value="Copper_CuA"/>
</dbReference>
<dbReference type="InterPro" id="IPR008972">
    <property type="entry name" value="Cupredoxin"/>
</dbReference>
<dbReference type="InterPro" id="IPR014222">
    <property type="entry name" value="Cyt_c_oxidase_su2"/>
</dbReference>
<dbReference type="InterPro" id="IPR011759">
    <property type="entry name" value="Cyt_c_oxidase_su2_TM_dom"/>
</dbReference>
<dbReference type="InterPro" id="IPR036257">
    <property type="entry name" value="Cyt_c_oxidase_su2_TM_sf"/>
</dbReference>
<dbReference type="NCBIfam" id="TIGR02866">
    <property type="entry name" value="CoxB"/>
    <property type="match status" value="1"/>
</dbReference>
<dbReference type="PANTHER" id="PTHR22888:SF9">
    <property type="entry name" value="CYTOCHROME C OXIDASE SUBUNIT 2"/>
    <property type="match status" value="1"/>
</dbReference>
<dbReference type="PANTHER" id="PTHR22888">
    <property type="entry name" value="CYTOCHROME C OXIDASE, SUBUNIT II"/>
    <property type="match status" value="1"/>
</dbReference>
<dbReference type="Pfam" id="PF00116">
    <property type="entry name" value="COX2"/>
    <property type="match status" value="1"/>
</dbReference>
<dbReference type="Pfam" id="PF02790">
    <property type="entry name" value="COX2_TM"/>
    <property type="match status" value="1"/>
</dbReference>
<dbReference type="PRINTS" id="PR01166">
    <property type="entry name" value="CYCOXIDASEII"/>
</dbReference>
<dbReference type="SUPFAM" id="SSF49503">
    <property type="entry name" value="Cupredoxins"/>
    <property type="match status" value="1"/>
</dbReference>
<dbReference type="SUPFAM" id="SSF81464">
    <property type="entry name" value="Cytochrome c oxidase subunit II-like, transmembrane region"/>
    <property type="match status" value="1"/>
</dbReference>
<dbReference type="PROSITE" id="PS00078">
    <property type="entry name" value="COX2"/>
    <property type="match status" value="1"/>
</dbReference>
<dbReference type="PROSITE" id="PS50857">
    <property type="entry name" value="COX2_CUA"/>
    <property type="match status" value="1"/>
</dbReference>
<dbReference type="PROSITE" id="PS50999">
    <property type="entry name" value="COX2_TM"/>
    <property type="match status" value="1"/>
</dbReference>
<evidence type="ECO:0000250" key="1">
    <source>
        <dbReference type="UniProtKB" id="P00403"/>
    </source>
</evidence>
<evidence type="ECO:0000250" key="2">
    <source>
        <dbReference type="UniProtKB" id="P00410"/>
    </source>
</evidence>
<evidence type="ECO:0000250" key="3">
    <source>
        <dbReference type="UniProtKB" id="P68530"/>
    </source>
</evidence>
<evidence type="ECO:0000305" key="4"/>
<evidence type="ECO:0000312" key="5">
    <source>
        <dbReference type="Proteomes" id="UP000002281"/>
    </source>
</evidence>
<accession>P48660</accession>
<sequence>MAYPFQLGFQDATSPIMEELLHFHDHTLMIVFLISSLVLYIISSMLTTKLTHTSTMDAQEVETIWTILPAIILILIALPSLRILYMMDEINNPSLTVKTMGHQWYWSYEYTDYEDLTFDSYMIPTSDLKPGELRLLEVDNRVVLPMEMTIRMLISSEDVLHSWAVPSLGLKTDAIPGRLNQTTLVASRPGLYYGQCSEICGSNHSFMPIVLELVPLKHFEEWSASML</sequence>
<name>COX2_HORSE</name>
<feature type="chain" id="PRO_0000183609" description="Cytochrome c oxidase subunit 2">
    <location>
        <begin position="1"/>
        <end position="227"/>
    </location>
</feature>
<feature type="topological domain" description="Mitochondrial intermembrane" evidence="3">
    <location>
        <begin position="1"/>
        <end position="14"/>
    </location>
</feature>
<feature type="transmembrane region" description="Helical; Name=I" evidence="3">
    <location>
        <begin position="15"/>
        <end position="45"/>
    </location>
</feature>
<feature type="topological domain" description="Mitochondrial matrix" evidence="3">
    <location>
        <begin position="46"/>
        <end position="59"/>
    </location>
</feature>
<feature type="transmembrane region" description="Helical; Name=II" evidence="3">
    <location>
        <begin position="60"/>
        <end position="87"/>
    </location>
</feature>
<feature type="topological domain" description="Mitochondrial intermembrane" evidence="3">
    <location>
        <begin position="88"/>
        <end position="227"/>
    </location>
</feature>
<feature type="binding site" evidence="3">
    <location>
        <position position="161"/>
    </location>
    <ligand>
        <name>Cu cation</name>
        <dbReference type="ChEBI" id="CHEBI:23378"/>
        <label>A1</label>
    </ligand>
</feature>
<feature type="binding site" evidence="3">
    <location>
        <position position="196"/>
    </location>
    <ligand>
        <name>Cu cation</name>
        <dbReference type="ChEBI" id="CHEBI:23378"/>
        <label>A1</label>
    </ligand>
</feature>
<feature type="binding site" evidence="3">
    <location>
        <position position="196"/>
    </location>
    <ligand>
        <name>Cu cation</name>
        <dbReference type="ChEBI" id="CHEBI:23378"/>
        <label>A2</label>
    </ligand>
</feature>
<feature type="binding site" evidence="3">
    <location>
        <position position="198"/>
    </location>
    <ligand>
        <name>Cu cation</name>
        <dbReference type="ChEBI" id="CHEBI:23378"/>
        <label>A2</label>
    </ligand>
</feature>
<feature type="binding site" evidence="3">
    <location>
        <position position="198"/>
    </location>
    <ligand>
        <name>Mg(2+)</name>
        <dbReference type="ChEBI" id="CHEBI:18420"/>
        <note>ligand shared with MT-CO1</note>
    </ligand>
</feature>
<feature type="binding site" evidence="3">
    <location>
        <position position="200"/>
    </location>
    <ligand>
        <name>Cu cation</name>
        <dbReference type="ChEBI" id="CHEBI:23378"/>
        <label>A1</label>
    </ligand>
</feature>
<feature type="binding site" evidence="3">
    <location>
        <position position="200"/>
    </location>
    <ligand>
        <name>Cu cation</name>
        <dbReference type="ChEBI" id="CHEBI:23378"/>
        <label>A2</label>
    </ligand>
</feature>
<feature type="binding site" evidence="3">
    <location>
        <position position="204"/>
    </location>
    <ligand>
        <name>Cu cation</name>
        <dbReference type="ChEBI" id="CHEBI:23378"/>
        <label>A2</label>
    </ligand>
</feature>
<feature type="binding site" evidence="3">
    <location>
        <position position="207"/>
    </location>
    <ligand>
        <name>Cu cation</name>
        <dbReference type="ChEBI" id="CHEBI:23378"/>
        <label>A1</label>
    </ligand>
</feature>
<comment type="function">
    <text evidence="2">Component of the cytochrome c oxidase, the last enzyme in the mitochondrial electron transport chain which drives oxidative phosphorylation. The respiratory chain contains 3 multisubunit complexes succinate dehydrogenase (complex II, CII), ubiquinol-cytochrome c oxidoreductase (cytochrome b-c1 complex, complex III, CIII) and cytochrome c oxidase (complex IV, CIV), that cooperate to transfer electrons derived from NADH and succinate to molecular oxygen, creating an electrochemical gradient over the inner membrane that drives transmembrane transport and the ATP synthase. Cytochrome c oxidase is the component of the respiratory chain that catalyzes the reduction of oxygen to water. Electrons originating from reduced cytochrome c in the intermembrane space (IMS) are transferred via the dinuclear copper A center (CU(A)) of subunit 2 and heme A of subunit 1 to the active site in subunit 1, a binuclear center (BNC) formed by heme A3 and copper B (CU(B)). The BNC reduces molecular oxygen to 2 water molecules using 4 electrons from cytochrome c in the IMS and 4 protons from the mitochondrial matrix.</text>
</comment>
<comment type="catalytic activity">
    <reaction evidence="2">
        <text>4 Fe(II)-[cytochrome c] + O2 + 8 H(+)(in) = 4 Fe(III)-[cytochrome c] + 2 H2O + 4 H(+)(out)</text>
        <dbReference type="Rhea" id="RHEA:11436"/>
        <dbReference type="Rhea" id="RHEA-COMP:10350"/>
        <dbReference type="Rhea" id="RHEA-COMP:14399"/>
        <dbReference type="ChEBI" id="CHEBI:15377"/>
        <dbReference type="ChEBI" id="CHEBI:15378"/>
        <dbReference type="ChEBI" id="CHEBI:15379"/>
        <dbReference type="ChEBI" id="CHEBI:29033"/>
        <dbReference type="ChEBI" id="CHEBI:29034"/>
        <dbReference type="EC" id="7.1.1.9"/>
    </reaction>
    <physiologicalReaction direction="left-to-right" evidence="2">
        <dbReference type="Rhea" id="RHEA:11437"/>
    </physiologicalReaction>
</comment>
<comment type="cofactor">
    <cofactor evidence="3">
        <name>Cu cation</name>
        <dbReference type="ChEBI" id="CHEBI:23378"/>
    </cofactor>
    <text evidence="3">Binds a dinuclear copper A center per subunit.</text>
</comment>
<comment type="subunit">
    <text evidence="1 3">Component of the cytochrome c oxidase (complex IV, CIV), a multisubunit enzyme composed of 14 subunits. The complex is composed of a catalytic core of 3 subunits MT-CO1, MT-CO2 and MT-CO3, encoded in the mitochondrial DNA, and 11 supernumerary subunits COX4I, COX5A, COX5B, COX6A, COX6B, COX6C, COX7A, COX7B, COX7C, COX8 and NDUFA4, which are encoded in the nuclear genome. The complex exists as a monomer or a dimer and forms supercomplexes (SCs) in the inner mitochondrial membrane with NADH-ubiquinone oxidoreductase (complex I, CI) and ubiquinol-cytochrome c oxidoreductase (cytochrome b-c1 complex, complex III, CIII), resulting in different assemblies (supercomplex SCI(1)III(2)IV(1) and megacomplex MCI(2)III(2)IV(2)) (By similarity). Found in a complex with TMEM177, COA6, COX18, COX20, SCO1 and SCO2. Interacts with TMEM177 in a COX20-dependent manner. Interacts with COX20. Interacts with COX16 (By similarity).</text>
</comment>
<comment type="subcellular location">
    <subcellularLocation>
        <location evidence="3">Mitochondrion inner membrane</location>
        <topology evidence="3">Multi-pass membrane protein</topology>
    </subcellularLocation>
</comment>
<comment type="similarity">
    <text evidence="4">Belongs to the cytochrome c oxidase subunit 2 family.</text>
</comment>
<proteinExistence type="inferred from homology"/>
<geneLocation type="mitochondrion"/>
<gene>
    <name type="primary">MT-CO2</name>
    <name type="synonym">COII</name>
    <name type="synonym">COX2</name>
    <name type="synonym">COXII</name>
    <name type="synonym">MTCO2</name>
</gene>
<reference key="1">
    <citation type="journal article" date="1994" name="Gene">
        <title>The complete mitochondrial DNA sequence of the horse, Equus caballus: extensive heteroplasmy of the control region.</title>
        <authorList>
            <person name="Xu X."/>
            <person name="Arnason U."/>
        </authorList>
    </citation>
    <scope>NUCLEOTIDE SEQUENCE [LARGE SCALE GENOMIC DNA]</scope>
    <source>
        <strain evidence="5">Thoroughbred</strain>
    </source>
</reference>
<reference key="2">
    <citation type="journal article" date="1996" name="J. Mammal. Evol.">
        <title>Phylogenetic analysis of the perissodactylan family Tapiridae using cytochrome c oxidase (COII) sequences.</title>
        <authorList>
            <person name="Ashley M.V."/>
            <person name="Norman J.E."/>
            <person name="Stross L."/>
        </authorList>
    </citation>
    <scope>NUCLEOTIDE SEQUENCE [GENOMIC DNA] OF 8-220</scope>
</reference>
<keyword id="KW-0186">Copper</keyword>
<keyword id="KW-0249">Electron transport</keyword>
<keyword id="KW-0460">Magnesium</keyword>
<keyword id="KW-0472">Membrane</keyword>
<keyword id="KW-0479">Metal-binding</keyword>
<keyword id="KW-0496">Mitochondrion</keyword>
<keyword id="KW-0999">Mitochondrion inner membrane</keyword>
<keyword id="KW-1185">Reference proteome</keyword>
<keyword id="KW-0679">Respiratory chain</keyword>
<keyword id="KW-1278">Translocase</keyword>
<keyword id="KW-0812">Transmembrane</keyword>
<keyword id="KW-1133">Transmembrane helix</keyword>
<keyword id="KW-0813">Transport</keyword>
<protein>
    <recommendedName>
        <fullName>Cytochrome c oxidase subunit 2</fullName>
        <ecNumber>7.1.1.9</ecNumber>
    </recommendedName>
    <alternativeName>
        <fullName>Cytochrome c oxidase polypeptide II</fullName>
    </alternativeName>
</protein>